<proteinExistence type="inferred from homology"/>
<reference key="1">
    <citation type="journal article" date="2006" name="Proc. Natl. Acad. Sci. U.S.A.">
        <title>Genome sequence of Synechococcus CC9311: insights into adaptation to a coastal environment.</title>
        <authorList>
            <person name="Palenik B."/>
            <person name="Ren Q."/>
            <person name="Dupont C.L."/>
            <person name="Myers G.S."/>
            <person name="Heidelberg J.F."/>
            <person name="Badger J.H."/>
            <person name="Madupu R."/>
            <person name="Nelson W.C."/>
            <person name="Brinkac L.M."/>
            <person name="Dodson R.J."/>
            <person name="Durkin A.S."/>
            <person name="Daugherty S.C."/>
            <person name="Sullivan S.A."/>
            <person name="Khouri H."/>
            <person name="Mohamoud Y."/>
            <person name="Halpin R."/>
            <person name="Paulsen I.T."/>
        </authorList>
    </citation>
    <scope>NUCLEOTIDE SEQUENCE [LARGE SCALE GENOMIC DNA]</scope>
    <source>
        <strain>CC9311</strain>
    </source>
</reference>
<organism>
    <name type="scientific">Synechococcus sp. (strain CC9311)</name>
    <dbReference type="NCBI Taxonomy" id="64471"/>
    <lineage>
        <taxon>Bacteria</taxon>
        <taxon>Bacillati</taxon>
        <taxon>Cyanobacteriota</taxon>
        <taxon>Cyanophyceae</taxon>
        <taxon>Synechococcales</taxon>
        <taxon>Synechococcaceae</taxon>
        <taxon>Synechococcus</taxon>
    </lineage>
</organism>
<evidence type="ECO:0000255" key="1">
    <source>
        <dbReference type="HAMAP-Rule" id="MF_01351"/>
    </source>
</evidence>
<evidence type="ECO:0000256" key="2">
    <source>
        <dbReference type="SAM" id="MobiDB-lite"/>
    </source>
</evidence>
<name>NDHI_SYNS3</name>
<keyword id="KW-0004">4Fe-4S</keyword>
<keyword id="KW-0408">Iron</keyword>
<keyword id="KW-0411">Iron-sulfur</keyword>
<keyword id="KW-0472">Membrane</keyword>
<keyword id="KW-0479">Metal-binding</keyword>
<keyword id="KW-0520">NAD</keyword>
<keyword id="KW-0521">NADP</keyword>
<keyword id="KW-0618">Plastoquinone</keyword>
<keyword id="KW-0874">Quinone</keyword>
<keyword id="KW-1185">Reference proteome</keyword>
<keyword id="KW-0677">Repeat</keyword>
<keyword id="KW-0793">Thylakoid</keyword>
<keyword id="KW-1278">Translocase</keyword>
<accession>Q0I6W0</accession>
<dbReference type="EC" id="7.1.1.-" evidence="1"/>
<dbReference type="EMBL" id="CP000435">
    <property type="protein sequence ID" value="ABI47879.1"/>
    <property type="molecule type" value="Genomic_DNA"/>
</dbReference>
<dbReference type="RefSeq" id="WP_011620516.1">
    <property type="nucleotide sequence ID" value="NC_008319.1"/>
</dbReference>
<dbReference type="SMR" id="Q0I6W0"/>
<dbReference type="STRING" id="64471.sync_2624"/>
<dbReference type="KEGG" id="syg:sync_2624"/>
<dbReference type="eggNOG" id="COG1143">
    <property type="taxonomic scope" value="Bacteria"/>
</dbReference>
<dbReference type="HOGENOM" id="CLU_122804_0_0_3"/>
<dbReference type="OrthoDB" id="9798098at2"/>
<dbReference type="Proteomes" id="UP000001961">
    <property type="component" value="Chromosome"/>
</dbReference>
<dbReference type="GO" id="GO:0031676">
    <property type="term" value="C:plasma membrane-derived thylakoid membrane"/>
    <property type="evidence" value="ECO:0007669"/>
    <property type="project" value="UniProtKB-SubCell"/>
</dbReference>
<dbReference type="GO" id="GO:0051539">
    <property type="term" value="F:4 iron, 4 sulfur cluster binding"/>
    <property type="evidence" value="ECO:0007669"/>
    <property type="project" value="UniProtKB-KW"/>
</dbReference>
<dbReference type="GO" id="GO:0005506">
    <property type="term" value="F:iron ion binding"/>
    <property type="evidence" value="ECO:0007669"/>
    <property type="project" value="UniProtKB-UniRule"/>
</dbReference>
<dbReference type="GO" id="GO:0008137">
    <property type="term" value="F:NADH dehydrogenase (ubiquinone) activity"/>
    <property type="evidence" value="ECO:0007669"/>
    <property type="project" value="InterPro"/>
</dbReference>
<dbReference type="GO" id="GO:0048038">
    <property type="term" value="F:quinone binding"/>
    <property type="evidence" value="ECO:0007669"/>
    <property type="project" value="UniProtKB-KW"/>
</dbReference>
<dbReference type="GO" id="GO:0019684">
    <property type="term" value="P:photosynthesis, light reaction"/>
    <property type="evidence" value="ECO:0007669"/>
    <property type="project" value="UniProtKB-UniRule"/>
</dbReference>
<dbReference type="Gene3D" id="3.30.70.3270">
    <property type="match status" value="1"/>
</dbReference>
<dbReference type="HAMAP" id="MF_01351">
    <property type="entry name" value="NDH1_NuoI"/>
    <property type="match status" value="1"/>
</dbReference>
<dbReference type="InterPro" id="IPR017896">
    <property type="entry name" value="4Fe4S_Fe-S-bd"/>
</dbReference>
<dbReference type="InterPro" id="IPR017900">
    <property type="entry name" value="4Fe4S_Fe_S_CS"/>
</dbReference>
<dbReference type="InterPro" id="IPR010226">
    <property type="entry name" value="NADH_quinone_OxRdtase_chainI"/>
</dbReference>
<dbReference type="InterPro" id="IPR004497">
    <property type="entry name" value="NDHI"/>
</dbReference>
<dbReference type="NCBIfam" id="TIGR00403">
    <property type="entry name" value="ndhI"/>
    <property type="match status" value="1"/>
</dbReference>
<dbReference type="NCBIfam" id="TIGR01971">
    <property type="entry name" value="NuoI"/>
    <property type="match status" value="1"/>
</dbReference>
<dbReference type="NCBIfam" id="NF004537">
    <property type="entry name" value="PRK05888.1-3"/>
    <property type="match status" value="1"/>
</dbReference>
<dbReference type="PANTHER" id="PTHR47275">
    <property type="entry name" value="NAD(P)H-QUINONE OXIDOREDUCTASE SUBUNIT I, CHLOROPLASTIC"/>
    <property type="match status" value="1"/>
</dbReference>
<dbReference type="PANTHER" id="PTHR47275:SF1">
    <property type="entry name" value="NAD(P)H-QUINONE OXIDOREDUCTASE SUBUNIT I, CHLOROPLASTIC"/>
    <property type="match status" value="1"/>
</dbReference>
<dbReference type="Pfam" id="PF12838">
    <property type="entry name" value="Fer4_7"/>
    <property type="match status" value="1"/>
</dbReference>
<dbReference type="SUPFAM" id="SSF54862">
    <property type="entry name" value="4Fe-4S ferredoxins"/>
    <property type="match status" value="1"/>
</dbReference>
<dbReference type="PROSITE" id="PS00198">
    <property type="entry name" value="4FE4S_FER_1"/>
    <property type="match status" value="2"/>
</dbReference>
<dbReference type="PROSITE" id="PS51379">
    <property type="entry name" value="4FE4S_FER_2"/>
    <property type="match status" value="2"/>
</dbReference>
<comment type="function">
    <text evidence="1">NDH-1 shuttles electrons from an unknown electron donor, via FMN and iron-sulfur (Fe-S) centers, to quinones in the respiratory and/or the photosynthetic chain. The immediate electron acceptor for the enzyme in this species is believed to be plastoquinone. Couples the redox reaction to proton translocation, and thus conserves the redox energy in a proton gradient.</text>
</comment>
<comment type="catalytic activity">
    <reaction evidence="1">
        <text>a plastoquinone + NADH + (n+1) H(+)(in) = a plastoquinol + NAD(+) + n H(+)(out)</text>
        <dbReference type="Rhea" id="RHEA:42608"/>
        <dbReference type="Rhea" id="RHEA-COMP:9561"/>
        <dbReference type="Rhea" id="RHEA-COMP:9562"/>
        <dbReference type="ChEBI" id="CHEBI:15378"/>
        <dbReference type="ChEBI" id="CHEBI:17757"/>
        <dbReference type="ChEBI" id="CHEBI:57540"/>
        <dbReference type="ChEBI" id="CHEBI:57945"/>
        <dbReference type="ChEBI" id="CHEBI:62192"/>
    </reaction>
</comment>
<comment type="catalytic activity">
    <reaction evidence="1">
        <text>a plastoquinone + NADPH + (n+1) H(+)(in) = a plastoquinol + NADP(+) + n H(+)(out)</text>
        <dbReference type="Rhea" id="RHEA:42612"/>
        <dbReference type="Rhea" id="RHEA-COMP:9561"/>
        <dbReference type="Rhea" id="RHEA-COMP:9562"/>
        <dbReference type="ChEBI" id="CHEBI:15378"/>
        <dbReference type="ChEBI" id="CHEBI:17757"/>
        <dbReference type="ChEBI" id="CHEBI:57783"/>
        <dbReference type="ChEBI" id="CHEBI:58349"/>
        <dbReference type="ChEBI" id="CHEBI:62192"/>
    </reaction>
</comment>
<comment type="cofactor">
    <cofactor evidence="1">
        <name>[4Fe-4S] cluster</name>
        <dbReference type="ChEBI" id="CHEBI:49883"/>
    </cofactor>
    <text evidence="1">Binds 2 [4Fe-4S] clusters per subunit.</text>
</comment>
<comment type="subunit">
    <text evidence="1">NDH-1 is composed of at least 11 different subunits.</text>
</comment>
<comment type="subcellular location">
    <subcellularLocation>
        <location evidence="1">Cellular thylakoid membrane</location>
        <topology evidence="1">Peripheral membrane protein</topology>
    </subcellularLocation>
</comment>
<comment type="similarity">
    <text evidence="1">Belongs to the complex I 23 kDa subunit family.</text>
</comment>
<protein>
    <recommendedName>
        <fullName evidence="1">NAD(P)H-quinone oxidoreductase subunit I</fullName>
        <ecNumber evidence="1">7.1.1.-</ecNumber>
    </recommendedName>
    <alternativeName>
        <fullName evidence="1">NAD(P)H dehydrogenase I subunit I</fullName>
    </alternativeName>
    <alternativeName>
        <fullName evidence="1">NDH-1 subunit I</fullName>
        <shortName evidence="1">NDH-I</shortName>
    </alternativeName>
</protein>
<gene>
    <name evidence="1" type="primary">ndhI</name>
    <name type="ordered locus">sync_2624</name>
</gene>
<sequence>MFGFLKQVGDYTRDAVDAARNLTQGLSVTFDHMKRRPVTVQYPYEKLIPSERYRGRIHYEFDKCIACEVCVRVCPINLPVVDWVMNKETKKKELRNYSIDFGVCIFCGNCVEYCPTNCLSMTEEYELAAFDRHSLNYDNVALGRLPTSVTTDPSVQPLRELVYLPAGEVQPHGVSPDRPRAGKLPEQILEELKAAGSMKAAEDERESSSSASNMEESAG</sequence>
<feature type="chain" id="PRO_0000298553" description="NAD(P)H-quinone oxidoreductase subunit I">
    <location>
        <begin position="1"/>
        <end position="219"/>
    </location>
</feature>
<feature type="domain" description="4Fe-4S ferredoxin-type 1" evidence="1">
    <location>
        <begin position="55"/>
        <end position="84"/>
    </location>
</feature>
<feature type="domain" description="4Fe-4S ferredoxin-type 2" evidence="1">
    <location>
        <begin position="95"/>
        <end position="124"/>
    </location>
</feature>
<feature type="region of interest" description="Disordered" evidence="2">
    <location>
        <begin position="192"/>
        <end position="219"/>
    </location>
</feature>
<feature type="compositionally biased region" description="Low complexity" evidence="2">
    <location>
        <begin position="208"/>
        <end position="219"/>
    </location>
</feature>
<feature type="binding site" evidence="1">
    <location>
        <position position="64"/>
    </location>
    <ligand>
        <name>[4Fe-4S] cluster</name>
        <dbReference type="ChEBI" id="CHEBI:49883"/>
        <label>1</label>
    </ligand>
</feature>
<feature type="binding site" evidence="1">
    <location>
        <position position="67"/>
    </location>
    <ligand>
        <name>[4Fe-4S] cluster</name>
        <dbReference type="ChEBI" id="CHEBI:49883"/>
        <label>1</label>
    </ligand>
</feature>
<feature type="binding site" evidence="1">
    <location>
        <position position="70"/>
    </location>
    <ligand>
        <name>[4Fe-4S] cluster</name>
        <dbReference type="ChEBI" id="CHEBI:49883"/>
        <label>1</label>
    </ligand>
</feature>
<feature type="binding site" evidence="1">
    <location>
        <position position="74"/>
    </location>
    <ligand>
        <name>[4Fe-4S] cluster</name>
        <dbReference type="ChEBI" id="CHEBI:49883"/>
        <label>2</label>
    </ligand>
</feature>
<feature type="binding site" evidence="1">
    <location>
        <position position="104"/>
    </location>
    <ligand>
        <name>[4Fe-4S] cluster</name>
        <dbReference type="ChEBI" id="CHEBI:49883"/>
        <label>2</label>
    </ligand>
</feature>
<feature type="binding site" evidence="1">
    <location>
        <position position="107"/>
    </location>
    <ligand>
        <name>[4Fe-4S] cluster</name>
        <dbReference type="ChEBI" id="CHEBI:49883"/>
        <label>2</label>
    </ligand>
</feature>
<feature type="binding site" evidence="1">
    <location>
        <position position="110"/>
    </location>
    <ligand>
        <name>[4Fe-4S] cluster</name>
        <dbReference type="ChEBI" id="CHEBI:49883"/>
        <label>2</label>
    </ligand>
</feature>
<feature type="binding site" evidence="1">
    <location>
        <position position="114"/>
    </location>
    <ligand>
        <name>[4Fe-4S] cluster</name>
        <dbReference type="ChEBI" id="CHEBI:49883"/>
        <label>1</label>
    </ligand>
</feature>